<accession>Q80WG5</accession>
<accession>A2AQZ0</accession>
<protein>
    <recommendedName>
        <fullName evidence="25 26">Volume-regulated anion channel subunit LRRC8A</fullName>
    </recommendedName>
    <alternativeName>
        <fullName evidence="24">Leucine-rich repeat-containing protein 8A</fullName>
    </alternativeName>
    <alternativeName>
        <fullName evidence="27">Protein ebouriffe</fullName>
        <shortName evidence="27">ebo</shortName>
    </alternativeName>
    <alternativeName>
        <fullName evidence="2">Swelling protein 1</fullName>
    </alternativeName>
</protein>
<dbReference type="EMBL" id="AL845258">
    <property type="status" value="NOT_ANNOTATED_CDS"/>
    <property type="molecule type" value="Genomic_DNA"/>
</dbReference>
<dbReference type="EMBL" id="CH466542">
    <property type="protein sequence ID" value="EDL08450.1"/>
    <property type="molecule type" value="Genomic_DNA"/>
</dbReference>
<dbReference type="EMBL" id="BC048152">
    <property type="status" value="NOT_ANNOTATED_CDS"/>
    <property type="molecule type" value="mRNA"/>
</dbReference>
<dbReference type="CCDS" id="CCDS15875.1"/>
<dbReference type="RefSeq" id="NP_808393.1">
    <property type="nucleotide sequence ID" value="NM_177725.4"/>
</dbReference>
<dbReference type="PDB" id="6FNW">
    <property type="method" value="X-ray"/>
    <property type="resolution" value="1.80 A"/>
    <property type="chains" value="A=398-810"/>
</dbReference>
<dbReference type="PDB" id="6G8Z">
    <property type="method" value="EM"/>
    <property type="resolution" value="3.66 A"/>
    <property type="chains" value="A/B/C/D/E/F=1-810"/>
</dbReference>
<dbReference type="PDB" id="6G9L">
    <property type="method" value="EM"/>
    <property type="resolution" value="5.01 A"/>
    <property type="chains" value="A/B/C/D/E/F=1-810"/>
</dbReference>
<dbReference type="PDB" id="6G9O">
    <property type="method" value="EM"/>
    <property type="resolution" value="4.25 A"/>
    <property type="chains" value="A/B/C/D/E/F=1-810"/>
</dbReference>
<dbReference type="PDB" id="6NZW">
    <property type="method" value="EM"/>
    <property type="resolution" value="3.21 A"/>
    <property type="chains" value="A/B/C/D/E/F=1-810"/>
</dbReference>
<dbReference type="PDB" id="6NZZ">
    <property type="method" value="EM"/>
    <property type="resolution" value="3.32 A"/>
    <property type="chains" value="A/B/C/D/E/F=1-810"/>
</dbReference>
<dbReference type="PDB" id="6O00">
    <property type="method" value="EM"/>
    <property type="resolution" value="4.18 A"/>
    <property type="chains" value="A/B/C/D/E/F=1-810"/>
</dbReference>
<dbReference type="PDB" id="7M17">
    <property type="method" value="EM"/>
    <property type="resolution" value="3.65 A"/>
    <property type="chains" value="A/B/C/D/E/F=1-810"/>
</dbReference>
<dbReference type="PDB" id="7M19">
    <property type="method" value="EM"/>
    <property type="resolution" value="3.69 A"/>
    <property type="chains" value="A/B/C/D/E/F=1-810"/>
</dbReference>
<dbReference type="PDB" id="7P60">
    <property type="method" value="EM"/>
    <property type="resolution" value="3.80 A"/>
    <property type="chains" value="A/B/C/D/E/F=1-810"/>
</dbReference>
<dbReference type="PDB" id="7P6K">
    <property type="method" value="EM"/>
    <property type="resolution" value="3.80 A"/>
    <property type="chains" value="A/B/C/D/E/F=1-810"/>
</dbReference>
<dbReference type="PDB" id="8B41">
    <property type="method" value="EM"/>
    <property type="resolution" value="3.80 A"/>
    <property type="chains" value="A/B/C/D=2-810"/>
</dbReference>
<dbReference type="PDB" id="8B42">
    <property type="method" value="EM"/>
    <property type="resolution" value="6.60 A"/>
    <property type="chains" value="A/B/C/D=2-810"/>
</dbReference>
<dbReference type="PDB" id="8DR8">
    <property type="method" value="EM"/>
    <property type="resolution" value="3.04 A"/>
    <property type="chains" value="A/B/C/D/E=1-71, A/B/C/D/E=91-810"/>
</dbReference>
<dbReference type="PDB" id="8DRA">
    <property type="method" value="EM"/>
    <property type="resolution" value="3.98 A"/>
    <property type="chains" value="A/B=1-71, A/B=91-810"/>
</dbReference>
<dbReference type="PDB" id="8DRE">
    <property type="method" value="EM"/>
    <property type="resolution" value="3.18 A"/>
    <property type="chains" value="A/B/C/D/E=1-71, A/B/C/D/E=91-810"/>
</dbReference>
<dbReference type="PDB" id="8DRK">
    <property type="method" value="EM"/>
    <property type="resolution" value="2.95 A"/>
    <property type="chains" value="A/B/C/D/E=1-71, A/B/C/D/E=91-810"/>
</dbReference>
<dbReference type="PDB" id="8DRN">
    <property type="method" value="EM"/>
    <property type="resolution" value="4.12 A"/>
    <property type="chains" value="A=1-71, A=91-810"/>
</dbReference>
<dbReference type="PDB" id="8DRO">
    <property type="method" value="EM"/>
    <property type="resolution" value="4.06 A"/>
    <property type="chains" value="B/C=1-71, B/C=91-810"/>
</dbReference>
<dbReference type="PDB" id="8DRQ">
    <property type="method" value="EM"/>
    <property type="resolution" value="4.16 A"/>
    <property type="chains" value="E=1-71, E=91-810"/>
</dbReference>
<dbReference type="PDB" id="8DS3">
    <property type="method" value="EM"/>
    <property type="resolution" value="3.07 A"/>
    <property type="chains" value="A/B/C/D/E=1-71, A/B/C/D/E=91-810"/>
</dbReference>
<dbReference type="PDB" id="8DS9">
    <property type="method" value="EM"/>
    <property type="resolution" value="3.17 A"/>
    <property type="chains" value="A/B/C/D/E=1-71, A/B/C/D/E=91-810"/>
</dbReference>
<dbReference type="PDB" id="8DSA">
    <property type="method" value="EM"/>
    <property type="resolution" value="3.48 A"/>
    <property type="chains" value="A/B/C/D/E=1-71, A/B/C/D/E=91-810"/>
</dbReference>
<dbReference type="PDB" id="8F74">
    <property type="method" value="EM"/>
    <property type="resolution" value="3.10 A"/>
    <property type="chains" value="A/B/C/D/E=1-76, A/B/C/D/E=92-810"/>
</dbReference>
<dbReference type="PDB" id="8F75">
    <property type="method" value="EM"/>
    <property type="resolution" value="4.00 A"/>
    <property type="chains" value="A/B=91-810"/>
</dbReference>
<dbReference type="PDB" id="8F77">
    <property type="method" value="EM"/>
    <property type="resolution" value="3.15 A"/>
    <property type="chains" value="A/B/C/D/E=1-76, A/B/C/D/E=90-810"/>
</dbReference>
<dbReference type="PDB" id="8F79">
    <property type="method" value="EM"/>
    <property type="resolution" value="3.15 A"/>
    <property type="chains" value="A/B/C/D/E=1-76, A/B/C/D/E=90-810"/>
</dbReference>
<dbReference type="PDB" id="8F7B">
    <property type="method" value="EM"/>
    <property type="resolution" value="3.15 A"/>
    <property type="chains" value="A/B/C/D/E=1-76, A/B/C/D/E=90-810"/>
</dbReference>
<dbReference type="PDB" id="8F7D">
    <property type="method" value="EM"/>
    <property type="resolution" value="4.20 A"/>
    <property type="chains" value="A=1-76, A=90-810"/>
</dbReference>
<dbReference type="PDB" id="8F7E">
    <property type="method" value="EM"/>
    <property type="resolution" value="4.13 A"/>
    <property type="chains" value="B/C=1-76, B/C=90-810"/>
</dbReference>
<dbReference type="PDB" id="8F7J">
    <property type="method" value="EM"/>
    <property type="resolution" value="4.32 A"/>
    <property type="chains" value="E=1-76, E=90-810"/>
</dbReference>
<dbReference type="PDB" id="9DX7">
    <property type="method" value="EM"/>
    <property type="resolution" value="3.30 A"/>
    <property type="chains" value="A/B/C/D=1-76, A/B/C/D=91-810"/>
</dbReference>
<dbReference type="PDB" id="9DXA">
    <property type="method" value="EM"/>
    <property type="resolution" value="3.40 A"/>
    <property type="chains" value="A/B/C/D=1-76, A/B/C/D=91-810"/>
</dbReference>
<dbReference type="PDBsum" id="6FNW"/>
<dbReference type="PDBsum" id="6G8Z"/>
<dbReference type="PDBsum" id="6G9L"/>
<dbReference type="PDBsum" id="6G9O"/>
<dbReference type="PDBsum" id="6NZW"/>
<dbReference type="PDBsum" id="6NZZ"/>
<dbReference type="PDBsum" id="6O00"/>
<dbReference type="PDBsum" id="7M17"/>
<dbReference type="PDBsum" id="7M19"/>
<dbReference type="PDBsum" id="7P60"/>
<dbReference type="PDBsum" id="7P6K"/>
<dbReference type="PDBsum" id="8B41"/>
<dbReference type="PDBsum" id="8B42"/>
<dbReference type="PDBsum" id="8DR8"/>
<dbReference type="PDBsum" id="8DRA"/>
<dbReference type="PDBsum" id="8DRE"/>
<dbReference type="PDBsum" id="8DRK"/>
<dbReference type="PDBsum" id="8DRN"/>
<dbReference type="PDBsum" id="8DRO"/>
<dbReference type="PDBsum" id="8DRQ"/>
<dbReference type="PDBsum" id="8DS3"/>
<dbReference type="PDBsum" id="8DS9"/>
<dbReference type="PDBsum" id="8DSA"/>
<dbReference type="PDBsum" id="8F74"/>
<dbReference type="PDBsum" id="8F75"/>
<dbReference type="PDBsum" id="8F77"/>
<dbReference type="PDBsum" id="8F79"/>
<dbReference type="PDBsum" id="8F7B"/>
<dbReference type="PDBsum" id="8F7D"/>
<dbReference type="PDBsum" id="8F7E"/>
<dbReference type="PDBsum" id="8F7J"/>
<dbReference type="PDBsum" id="9DX7"/>
<dbReference type="PDBsum" id="9DXA"/>
<dbReference type="EMDB" id="EMD-0562"/>
<dbReference type="EMDB" id="EMD-0563"/>
<dbReference type="EMDB" id="EMD-0564"/>
<dbReference type="EMDB" id="EMD-13202"/>
<dbReference type="EMDB" id="EMD-13203"/>
<dbReference type="EMDB" id="EMD-13208"/>
<dbReference type="EMDB" id="EMD-13213"/>
<dbReference type="EMDB" id="EMD-13230"/>
<dbReference type="EMDB" id="EMD-15836"/>
<dbReference type="EMDB" id="EMD-15837"/>
<dbReference type="EMDB" id="EMD-23614"/>
<dbReference type="EMDB" id="EMD-23616"/>
<dbReference type="EMDB" id="EMD-27675"/>
<dbReference type="EMDB" id="EMD-27678"/>
<dbReference type="EMDB" id="EMD-27679"/>
<dbReference type="EMDB" id="EMD-27681"/>
<dbReference type="EMDB" id="EMD-28895"/>
<dbReference type="EMDB" id="EMD-28903"/>
<dbReference type="EMDB" id="EMD-28904"/>
<dbReference type="EMDB" id="EMD-28905"/>
<dbReference type="EMDB" id="EMD-4362"/>
<dbReference type="EMDB" id="EMD-4366"/>
<dbReference type="EMDB" id="EMD-4367"/>
<dbReference type="EMDB" id="EMD-47282"/>
<dbReference type="EMDB" id="EMD-47283"/>
<dbReference type="SMR" id="Q80WG5"/>
<dbReference type="BioGRID" id="232303">
    <property type="interactions" value="1"/>
</dbReference>
<dbReference type="FunCoup" id="Q80WG5">
    <property type="interactions" value="730"/>
</dbReference>
<dbReference type="IntAct" id="Q80WG5">
    <property type="interactions" value="2"/>
</dbReference>
<dbReference type="MINT" id="Q80WG5"/>
<dbReference type="STRING" id="10090.ENSMUSP00000092690"/>
<dbReference type="GlyCosmos" id="Q80WG5">
    <property type="glycosylation" value="2 sites, No reported glycans"/>
</dbReference>
<dbReference type="GlyGen" id="Q80WG5">
    <property type="glycosylation" value="5 sites, 2 N-linked glycans (2 sites), 1 O-linked glycan (1 site)"/>
</dbReference>
<dbReference type="iPTMnet" id="Q80WG5"/>
<dbReference type="PhosphoSitePlus" id="Q80WG5"/>
<dbReference type="SwissPalm" id="Q80WG5"/>
<dbReference type="jPOST" id="Q80WG5"/>
<dbReference type="PaxDb" id="10090-ENSMUSP00000092690"/>
<dbReference type="PeptideAtlas" id="Q80WG5"/>
<dbReference type="ProteomicsDB" id="252672"/>
<dbReference type="Pumba" id="Q80WG5"/>
<dbReference type="ABCD" id="Q80WG5">
    <property type="antibodies" value="5 sequenced antibodies"/>
</dbReference>
<dbReference type="Ensembl" id="ENSMUST00000095078.3">
    <property type="protein sequence ID" value="ENSMUSP00000092690.3"/>
    <property type="gene ID" value="ENSMUSG00000007476.19"/>
</dbReference>
<dbReference type="Ensembl" id="ENSMUST00000113654.8">
    <property type="protein sequence ID" value="ENSMUSP00000109284.2"/>
    <property type="gene ID" value="ENSMUSG00000007476.19"/>
</dbReference>
<dbReference type="Ensembl" id="ENSMUST00000139454.3">
    <property type="protein sequence ID" value="ENSMUSP00000139038.2"/>
    <property type="gene ID" value="ENSMUSG00000099041.2"/>
</dbReference>
<dbReference type="GeneID" id="241296"/>
<dbReference type="KEGG" id="mmu:241296"/>
<dbReference type="UCSC" id="uc008jbu.2">
    <property type="organism name" value="mouse"/>
</dbReference>
<dbReference type="AGR" id="MGI:2652847"/>
<dbReference type="AGR" id="MGI:5547771"/>
<dbReference type="CTD" id="56262"/>
<dbReference type="MGI" id="MGI:2652847">
    <property type="gene designation" value="Lrrc8a"/>
</dbReference>
<dbReference type="VEuPathDB" id="HostDB:ENSMUSG00000007476"/>
<dbReference type="VEuPathDB" id="HostDB:ENSMUSG00000099041"/>
<dbReference type="eggNOG" id="KOG0619">
    <property type="taxonomic scope" value="Eukaryota"/>
</dbReference>
<dbReference type="GeneTree" id="ENSGT00940000154043"/>
<dbReference type="HOGENOM" id="CLU_019019_0_0_1"/>
<dbReference type="InParanoid" id="Q80WG5"/>
<dbReference type="OMA" id="CKWILND"/>
<dbReference type="OrthoDB" id="660555at2759"/>
<dbReference type="PhylomeDB" id="Q80WG5"/>
<dbReference type="TreeFam" id="TF331443"/>
<dbReference type="Reactome" id="R-MMU-5223345">
    <property type="pathway name" value="Miscellaneous transport and binding events"/>
</dbReference>
<dbReference type="BioGRID-ORCS" id="241296">
    <property type="hits" value="6 hits in 77 CRISPR screens"/>
</dbReference>
<dbReference type="CD-CODE" id="CE726F99">
    <property type="entry name" value="Postsynaptic density"/>
</dbReference>
<dbReference type="ChiTaRS" id="Lrrc8a">
    <property type="organism name" value="mouse"/>
</dbReference>
<dbReference type="PRO" id="PR:Q80WG5"/>
<dbReference type="Proteomes" id="UP000000589">
    <property type="component" value="Chromosome 2"/>
</dbReference>
<dbReference type="RNAct" id="Q80WG5">
    <property type="molecule type" value="protein"/>
</dbReference>
<dbReference type="Bgee" id="ENSMUSG00000007476">
    <property type="expression patterns" value="Expressed in ankle joint and 258 other cell types or tissues"/>
</dbReference>
<dbReference type="GO" id="GO:0009986">
    <property type="term" value="C:cell surface"/>
    <property type="evidence" value="ECO:0000266"/>
    <property type="project" value="MGI"/>
</dbReference>
<dbReference type="GO" id="GO:0005765">
    <property type="term" value="C:lysosomal membrane"/>
    <property type="evidence" value="ECO:0007669"/>
    <property type="project" value="UniProtKB-SubCell"/>
</dbReference>
<dbReference type="GO" id="GO:0034702">
    <property type="term" value="C:monoatomic ion channel complex"/>
    <property type="evidence" value="ECO:0000314"/>
    <property type="project" value="UniProtKB"/>
</dbReference>
<dbReference type="GO" id="GO:0005886">
    <property type="term" value="C:plasma membrane"/>
    <property type="evidence" value="ECO:0000314"/>
    <property type="project" value="UniProtKB"/>
</dbReference>
<dbReference type="GO" id="GO:0140360">
    <property type="term" value="F:cyclic-GMP-AMP transmembrane transporter activity"/>
    <property type="evidence" value="ECO:0000314"/>
    <property type="project" value="UniProtKB"/>
</dbReference>
<dbReference type="GO" id="GO:0042802">
    <property type="term" value="F:identical protein binding"/>
    <property type="evidence" value="ECO:0000353"/>
    <property type="project" value="IntAct"/>
</dbReference>
<dbReference type="GO" id="GO:0005225">
    <property type="term" value="F:volume-sensitive anion channel activity"/>
    <property type="evidence" value="ECO:0000314"/>
    <property type="project" value="UniProtKB"/>
</dbReference>
<dbReference type="GO" id="GO:0015810">
    <property type="term" value="P:aspartate transmembrane transport"/>
    <property type="evidence" value="ECO:0007669"/>
    <property type="project" value="Ensembl"/>
</dbReference>
<dbReference type="GO" id="GO:0006884">
    <property type="term" value="P:cell volume homeostasis"/>
    <property type="evidence" value="ECO:0000250"/>
    <property type="project" value="UniProtKB"/>
</dbReference>
<dbReference type="GO" id="GO:1902476">
    <property type="term" value="P:chloride transmembrane transport"/>
    <property type="evidence" value="ECO:0007669"/>
    <property type="project" value="Ensembl"/>
</dbReference>
<dbReference type="GO" id="GO:0140361">
    <property type="term" value="P:cyclic-GMP-AMP transmembrane import across plasma membrane"/>
    <property type="evidence" value="ECO:0000314"/>
    <property type="project" value="UniProtKB"/>
</dbReference>
<dbReference type="GO" id="GO:0001678">
    <property type="term" value="P:intracellular glucose homeostasis"/>
    <property type="evidence" value="ECO:0000315"/>
    <property type="project" value="UniProtKB"/>
</dbReference>
<dbReference type="GO" id="GO:0098656">
    <property type="term" value="P:monoatomic anion transmembrane transport"/>
    <property type="evidence" value="ECO:0000314"/>
    <property type="project" value="UniProtKB"/>
</dbReference>
<dbReference type="GO" id="GO:0006820">
    <property type="term" value="P:monoatomic anion transport"/>
    <property type="evidence" value="ECO:0000250"/>
    <property type="project" value="UniProtKB"/>
</dbReference>
<dbReference type="GO" id="GO:0032024">
    <property type="term" value="P:positive regulation of insulin secretion"/>
    <property type="evidence" value="ECO:0000315"/>
    <property type="project" value="UniProtKB"/>
</dbReference>
<dbReference type="GO" id="GO:0045663">
    <property type="term" value="P:positive regulation of myoblast differentiation"/>
    <property type="evidence" value="ECO:0000315"/>
    <property type="project" value="UniProtKB"/>
</dbReference>
<dbReference type="GO" id="GO:0002329">
    <property type="term" value="P:pre-B cell differentiation"/>
    <property type="evidence" value="ECO:0000315"/>
    <property type="project" value="UniProtKB"/>
</dbReference>
<dbReference type="GO" id="GO:0034214">
    <property type="term" value="P:protein hexamerization"/>
    <property type="evidence" value="ECO:0000314"/>
    <property type="project" value="UniProtKB"/>
</dbReference>
<dbReference type="GO" id="GO:0006970">
    <property type="term" value="P:response to osmotic stress"/>
    <property type="evidence" value="ECO:0000250"/>
    <property type="project" value="UniProtKB"/>
</dbReference>
<dbReference type="GO" id="GO:0007283">
    <property type="term" value="P:spermatogenesis"/>
    <property type="evidence" value="ECO:0000315"/>
    <property type="project" value="UniProtKB"/>
</dbReference>
<dbReference type="GO" id="GO:0015734">
    <property type="term" value="P:taurine transmembrane transport"/>
    <property type="evidence" value="ECO:0007669"/>
    <property type="project" value="Ensembl"/>
</dbReference>
<dbReference type="FunFam" id="3.80.10.10:FF:000223">
    <property type="entry name" value="Leucine-rich repeat-containing 8 VRAC subunit A"/>
    <property type="match status" value="1"/>
</dbReference>
<dbReference type="FunFam" id="3.80.10.10:FF:000871">
    <property type="entry name" value="volume-regulated anion channel subunit LRRC8A"/>
    <property type="match status" value="1"/>
</dbReference>
<dbReference type="Gene3D" id="3.80.10.10">
    <property type="entry name" value="Ribonuclease Inhibitor"/>
    <property type="match status" value="2"/>
</dbReference>
<dbReference type="InterPro" id="IPR001611">
    <property type="entry name" value="Leu-rich_rpt"/>
</dbReference>
<dbReference type="InterPro" id="IPR003591">
    <property type="entry name" value="Leu-rich_rpt_typical-subtyp"/>
</dbReference>
<dbReference type="InterPro" id="IPR032675">
    <property type="entry name" value="LRR_dom_sf"/>
</dbReference>
<dbReference type="InterPro" id="IPR050216">
    <property type="entry name" value="LRR_domain-containing"/>
</dbReference>
<dbReference type="InterPro" id="IPR055414">
    <property type="entry name" value="LRR_R13L4/SHOC2-like"/>
</dbReference>
<dbReference type="InterPro" id="IPR021040">
    <property type="entry name" value="LRRC8_Pannexin-like"/>
</dbReference>
<dbReference type="PANTHER" id="PTHR48051">
    <property type="match status" value="1"/>
</dbReference>
<dbReference type="PANTHER" id="PTHR48051:SF1">
    <property type="entry name" value="RAS SUPPRESSOR PROTEIN 1"/>
    <property type="match status" value="1"/>
</dbReference>
<dbReference type="Pfam" id="PF23598">
    <property type="entry name" value="LRR_14"/>
    <property type="match status" value="1"/>
</dbReference>
<dbReference type="Pfam" id="PF13855">
    <property type="entry name" value="LRR_8"/>
    <property type="match status" value="1"/>
</dbReference>
<dbReference type="Pfam" id="PF12534">
    <property type="entry name" value="Pannexin_like"/>
    <property type="match status" value="1"/>
</dbReference>
<dbReference type="SMART" id="SM00365">
    <property type="entry name" value="LRR_SD22"/>
    <property type="match status" value="3"/>
</dbReference>
<dbReference type="SMART" id="SM00369">
    <property type="entry name" value="LRR_TYP"/>
    <property type="match status" value="8"/>
</dbReference>
<dbReference type="SUPFAM" id="SSF52058">
    <property type="entry name" value="L domain-like"/>
    <property type="match status" value="1"/>
</dbReference>
<dbReference type="PROSITE" id="PS51450">
    <property type="entry name" value="LRR"/>
    <property type="match status" value="11"/>
</dbReference>
<sequence length="810" mass="94120">MIPVTELRYFADTQPAYRILKPWWDVFTDYISIVMLMIAVFGGTLQVTQDKMICLPCKWVTKDSCNDSFRGWAASSPEPTYPNSTVLPTPDTGPTGIKYDLDRHQYNYVDAVCYENRLHWFAKYFPYLVLLHTLIFLACSNFWFKFPRTSSKLEHFVSILLKCFDSPWTTRALSETVVEESDPKPAFSKMNGSMDKKSSTVSEDVEATVPMLQRTKSRIEQGIVDRSETGVLDKKEGEQAKALFEKVKKFRTHVEEGDIVYRLYMRQTIIKVIKFALIICYTVYYVHNIKFDVDCTVDIESLTGYRTYRCAHPLATLFKILASFYISLVIFYGLICMYTLWWMLRRSLKKYSFESIREESSYSDIPDVKNDFAFMLHLIDQYDPLYSKRFAVFLSEVSENKLRQLNLNNEWTLDKLRQRLTKNAQDKLELHLFMLSGIPDTVFDLVELEVLKLELIPDVTIPPSIAQLTGLKELWLYHTAAKIEAPALAFLRENLRALHIKFTDIKEIPLWIYSLKTLEELHLTGNLSAENNRYIVIDGLRELKRLKVLRLKSNLSKLPQVVTDVGVHLQKLSINNEGTKLIVLNSLKKMVNLTELELIRCDLERIPHSIFSLHNLQEIDLKDNNLKTIEEIISFQHLHRLTCLKLWYNHIAYIPIQIGNLTNLERLYLNRNKIEKIPTQLFYCRKLRYLDLSHNNLTFLPADIGLLQNLQNLAVTANRIEALPPELFQCRKLRALHLGNNVLQSLPSRVGELTNLTQIELRGNRLECLPVELGECPLLKRSGLVVEEDLFSTLPPEVKERLWRADKEQA</sequence>
<name>LRC8A_MOUSE</name>
<gene>
    <name evidence="24 30" type="primary">Lrrc8a</name>
    <name evidence="23" type="synonym">Lrrc8</name>
    <name evidence="2" type="synonym">Swell1</name>
</gene>
<feature type="chain" id="PRO_0000084500" description="Volume-regulated anion channel subunit LRRC8A">
    <location>
        <begin position="1"/>
        <end position="810"/>
    </location>
</feature>
<feature type="topological domain" description="Cytoplasmic" evidence="15 19 20 35 36 37 38 39 43">
    <location>
        <begin position="1"/>
        <end position="22"/>
    </location>
</feature>
<feature type="transmembrane region" description="Helical; Name=1" evidence="15 19 20 35 36 37 38 39 43">
    <location>
        <begin position="23"/>
        <end position="47"/>
    </location>
</feature>
<feature type="topological domain" description="Extracellular" evidence="15 19 20 35 36 37 38 39 43">
    <location>
        <begin position="48"/>
        <end position="123"/>
    </location>
</feature>
<feature type="transmembrane region" description="Helical; Name=2" evidence="15 19 20 35 36 37 38 39 43">
    <location>
        <begin position="124"/>
        <end position="142"/>
    </location>
</feature>
<feature type="topological domain" description="Cytoplasmic" evidence="15 19 20 35 36 37 38 39 43">
    <location>
        <begin position="143"/>
        <end position="264"/>
    </location>
</feature>
<feature type="transmembrane region" description="Helical; Name=3" evidence="15 19 20 35 36 37 38 39 43">
    <location>
        <begin position="265"/>
        <end position="286"/>
    </location>
</feature>
<feature type="topological domain" description="Extracellular" evidence="15 19 20 35 36 37 38 39 43">
    <location>
        <begin position="287"/>
        <end position="316"/>
    </location>
</feature>
<feature type="transmembrane region" description="Helical; Name=4" evidence="15 19 20 35 36 37 38 39 43">
    <location>
        <begin position="317"/>
        <end position="341"/>
    </location>
</feature>
<feature type="topological domain" description="Cytoplasmic" evidence="15 19 20 35 36 37 38 39 43">
    <location>
        <begin position="342"/>
        <end position="810"/>
    </location>
</feature>
<feature type="repeat" description="LRR 1" evidence="3 19 20 38 39 43">
    <location>
        <begin position="411"/>
        <end position="422"/>
    </location>
</feature>
<feature type="repeat" description="LRR 2" evidence="3 19 20 29 38 39 43">
    <location>
        <begin position="423"/>
        <end position="445"/>
    </location>
</feature>
<feature type="repeat" description="LRR 3" evidence="3 19 20 29 38 39 43">
    <location>
        <begin position="447"/>
        <end position="468"/>
    </location>
</feature>
<feature type="repeat" description="LRR 4" evidence="3 19 20 29 38 39 43">
    <location>
        <begin position="469"/>
        <end position="492"/>
    </location>
</feature>
<feature type="repeat" description="LRR 5" evidence="3 19 20 29 38 39 43">
    <location>
        <begin position="493"/>
        <end position="515"/>
    </location>
</feature>
<feature type="repeat" description="LRR 6" evidence="3 19 20 29 38 39 43">
    <location>
        <begin position="518"/>
        <end position="542"/>
    </location>
</feature>
<feature type="repeat" description="LRR 7" evidence="3 19 20 29 38 39 43">
    <location>
        <begin position="543"/>
        <end position="565"/>
    </location>
</feature>
<feature type="repeat" description="LRR 8" evidence="3 19 20 29 38 39 43">
    <location>
        <begin position="567"/>
        <end position="589"/>
    </location>
</feature>
<feature type="repeat" description="LRR 9" evidence="3 19 20 29 38 39 43">
    <location>
        <begin position="590"/>
        <end position="613"/>
    </location>
</feature>
<feature type="repeat" description="LRR 10" evidence="3 19 20 29 38 39 43">
    <location>
        <begin position="614"/>
        <end position="637"/>
    </location>
</feature>
<feature type="repeat" description="LRR 11" evidence="3 19 20 29 38 39 43">
    <location>
        <begin position="639"/>
        <end position="661"/>
    </location>
</feature>
<feature type="repeat" description="LRR 12" evidence="3 19 20 29 38 39 43">
    <location>
        <begin position="662"/>
        <end position="684"/>
    </location>
</feature>
<feature type="repeat" description="LRR 13" evidence="3 19 20 29 38 39 43">
    <location>
        <begin position="686"/>
        <end position="707"/>
    </location>
</feature>
<feature type="repeat" description="LRR 14" evidence="3 19 20 29 38 39 43">
    <location>
        <begin position="708"/>
        <end position="730"/>
    </location>
</feature>
<feature type="repeat" description="LRR 15" evidence="3 19 20 29 38 39 43">
    <location>
        <begin position="732"/>
        <end position="753"/>
    </location>
</feature>
<feature type="repeat" description="LRR 16" evidence="3 19 20 29 38 39 43">
    <location>
        <begin position="754"/>
        <end position="776"/>
    </location>
</feature>
<feature type="repeat" description="LRR 17" evidence="3 19 20 29 38 39 43">
    <location>
        <begin position="778"/>
        <end position="801"/>
    </location>
</feature>
<feature type="short sequence motif" description="Di-leucine motif" evidence="2">
    <location>
        <begin position="706"/>
        <end position="707"/>
    </location>
</feature>
<feature type="site" description="Required for anion selectivity" evidence="25 38 39">
    <location>
        <position position="103"/>
    </location>
</feature>
<feature type="modified residue" description="N-acetylmethionine" evidence="2">
    <location>
        <position position="1"/>
    </location>
</feature>
<feature type="modified residue" description="Phosphothreonine" evidence="54">
    <location>
        <position position="200"/>
    </location>
</feature>
<feature type="modified residue" description="Phosphoserine" evidence="54">
    <location>
        <position position="202"/>
    </location>
</feature>
<feature type="modified residue" description="Phosphothreonine" evidence="2">
    <location>
        <position position="215"/>
    </location>
</feature>
<feature type="modified residue" description="Phosphoserine" evidence="2">
    <location>
        <position position="217"/>
    </location>
</feature>
<feature type="glycosylation site" description="N-linked (GlcNAc...) asparagine" evidence="3">
    <location>
        <position position="66"/>
    </location>
</feature>
<feature type="glycosylation site" description="N-linked (GlcNAc...) asparagine" evidence="3">
    <location>
        <position position="83"/>
    </location>
</feature>
<feature type="disulfide bond" evidence="11 15 19 20 32 35 36 37 38 39 40 42 43 47 48 49 50 51 52 53">
    <location>
        <begin position="54"/>
        <end position="310"/>
    </location>
</feature>
<feature type="disulfide bond" evidence="11 15 19 20 32 35 36 37 38 39 40 42 43 47 48 49 50 51 52 53">
    <location>
        <begin position="57"/>
        <end position="65"/>
    </location>
</feature>
<feature type="disulfide bond" evidence="11 15 19 20 32 35 36 37 38 39 40 42 43 47 48 49 50 51 52 53">
    <location>
        <begin position="113"/>
        <end position="295"/>
    </location>
</feature>
<feature type="sequence variant" description="In ebo; causes male sterility." evidence="9 14">
    <location>
        <begin position="443"/>
        <end position="810"/>
    </location>
</feature>
<feature type="mutagenesis site" description="Abolishes activity in hypotonic solution." evidence="20">
    <original>V</original>
    <variation>D</variation>
    <location>
        <position position="40"/>
    </location>
</feature>
<feature type="mutagenesis site" description="Abolishes activity in hypotonic solution." evidence="20">
    <original>T</original>
    <variation>D</variation>
    <location>
        <position position="44"/>
    </location>
</feature>
<feature type="mutagenesis site" description="Abolishes activity in hypotonic solution." evidence="20">
    <original>V</original>
    <variation>D</variation>
    <location>
        <position position="47"/>
    </location>
</feature>
<feature type="mutagenesis site" description="Impairs activity in hypotonic solution." evidence="20">
    <original>V</original>
    <variation>K</variation>
    <variation>N</variation>
    <location>
        <position position="47"/>
    </location>
</feature>
<feature type="mutagenesis site" description="Abolishes activity in hypotonic solution." evidence="20">
    <original>T</original>
    <variation>D</variation>
    <location>
        <position position="48"/>
    </location>
</feature>
<feature type="mutagenesis site" description="Impairs activity in hypotonic solution." evidence="20">
    <original>T</original>
    <variation>W</variation>
    <variation>Y</variation>
    <variation>K</variation>
    <variation>N</variation>
    <location>
        <position position="48"/>
    </location>
</feature>
<feature type="mutagenesis site" description="No effect on anion channel activity. Impairs channel selectivity, so that the channel is also permeable to Na(+) ions." evidence="11">
    <original>R</original>
    <variation>A</variation>
    <location>
        <position position="103"/>
    </location>
</feature>
<feature type="helix" evidence="57">
    <location>
        <begin position="17"/>
        <end position="20"/>
    </location>
</feature>
<feature type="helix" evidence="57">
    <location>
        <begin position="23"/>
        <end position="48"/>
    </location>
</feature>
<feature type="strand" evidence="57">
    <location>
        <begin position="53"/>
        <end position="56"/>
    </location>
</feature>
<feature type="strand" evidence="57">
    <location>
        <begin position="58"/>
        <end position="65"/>
    </location>
</feature>
<feature type="helix" evidence="57">
    <location>
        <begin position="103"/>
        <end position="115"/>
    </location>
</feature>
<feature type="strand" evidence="57">
    <location>
        <begin position="116"/>
        <end position="118"/>
    </location>
</feature>
<feature type="helix" evidence="57">
    <location>
        <begin position="120"/>
        <end position="140"/>
    </location>
</feature>
<feature type="turn" evidence="57">
    <location>
        <begin position="143"/>
        <end position="145"/>
    </location>
</feature>
<feature type="helix" evidence="57">
    <location>
        <begin position="147"/>
        <end position="164"/>
    </location>
</feature>
<feature type="helix" evidence="57">
    <location>
        <begin position="167"/>
        <end position="174"/>
    </location>
</feature>
<feature type="helix" evidence="57">
    <location>
        <begin position="234"/>
        <end position="254"/>
    </location>
</feature>
<feature type="helix" evidence="57">
    <location>
        <begin position="259"/>
        <end position="285"/>
    </location>
</feature>
<feature type="helix" evidence="57">
    <location>
        <begin position="286"/>
        <end position="288"/>
    </location>
</feature>
<feature type="strand" evidence="57">
    <location>
        <begin position="291"/>
        <end position="296"/>
    </location>
</feature>
<feature type="turn" evidence="57">
    <location>
        <begin position="300"/>
        <end position="302"/>
    </location>
</feature>
<feature type="strand" evidence="57">
    <location>
        <begin position="306"/>
        <end position="311"/>
    </location>
</feature>
<feature type="helix" evidence="57">
    <location>
        <begin position="313"/>
        <end position="315"/>
    </location>
</feature>
<feature type="helix" evidence="57">
    <location>
        <begin position="316"/>
        <end position="344"/>
    </location>
</feature>
<feature type="turn" evidence="56">
    <location>
        <begin position="346"/>
        <end position="349"/>
    </location>
</feature>
<feature type="helix" evidence="57">
    <location>
        <begin position="354"/>
        <end position="359"/>
    </location>
</feature>
<feature type="helix" evidence="57">
    <location>
        <begin position="370"/>
        <end position="382"/>
    </location>
</feature>
<feature type="helix" evidence="57">
    <location>
        <begin position="384"/>
        <end position="391"/>
    </location>
</feature>
<feature type="helix" evidence="57">
    <location>
        <begin position="392"/>
        <end position="394"/>
    </location>
</feature>
<feature type="helix" evidence="55">
    <location>
        <begin position="398"/>
        <end position="410"/>
    </location>
</feature>
<feature type="helix" evidence="55">
    <location>
        <begin position="413"/>
        <end position="419"/>
    </location>
</feature>
<feature type="strand" evidence="55">
    <location>
        <begin position="428"/>
        <end position="434"/>
    </location>
</feature>
<feature type="helix" evidence="55">
    <location>
        <begin position="440"/>
        <end position="444"/>
    </location>
</feature>
<feature type="strand" evidence="55">
    <location>
        <begin position="450"/>
        <end position="455"/>
    </location>
</feature>
<feature type="strand" evidence="55">
    <location>
        <begin position="457"/>
        <end position="461"/>
    </location>
</feature>
<feature type="helix" evidence="55">
    <location>
        <begin position="463"/>
        <end position="467"/>
    </location>
</feature>
<feature type="strand" evidence="55">
    <location>
        <begin position="473"/>
        <end position="478"/>
    </location>
</feature>
<feature type="strand" evidence="55">
    <location>
        <begin position="481"/>
        <end position="483"/>
    </location>
</feature>
<feature type="helix" evidence="55">
    <location>
        <begin position="485"/>
        <end position="494"/>
    </location>
</feature>
<feature type="strand" evidence="55">
    <location>
        <begin position="497"/>
        <end position="501"/>
    </location>
</feature>
<feature type="helix" evidence="55">
    <location>
        <begin position="505"/>
        <end position="507"/>
    </location>
</feature>
<feature type="helix" evidence="55">
    <location>
        <begin position="510"/>
        <end position="514"/>
    </location>
</feature>
<feature type="strand" evidence="55">
    <location>
        <begin position="520"/>
        <end position="525"/>
    </location>
</feature>
<feature type="helix" evidence="55">
    <location>
        <begin position="535"/>
        <end position="538"/>
    </location>
</feature>
<feature type="helix" evidence="55">
    <location>
        <begin position="539"/>
        <end position="542"/>
    </location>
</feature>
<feature type="strand" evidence="55">
    <location>
        <begin position="548"/>
        <end position="553"/>
    </location>
</feature>
<feature type="helix" evidence="55">
    <location>
        <begin position="560"/>
        <end position="564"/>
    </location>
</feature>
<feature type="helix" evidence="55">
    <location>
        <begin position="565"/>
        <end position="567"/>
    </location>
</feature>
<feature type="strand" evidence="55">
    <location>
        <begin position="571"/>
        <end position="575"/>
    </location>
</feature>
<feature type="helix" evidence="55">
    <location>
        <begin position="586"/>
        <end position="589"/>
    </location>
</feature>
<feature type="strand" evidence="55">
    <location>
        <begin position="594"/>
        <end position="600"/>
    </location>
</feature>
<feature type="helix" evidence="55">
    <location>
        <begin position="608"/>
        <end position="612"/>
    </location>
</feature>
<feature type="strand" evidence="55">
    <location>
        <begin position="618"/>
        <end position="620"/>
    </location>
</feature>
<feature type="helix" evidence="55">
    <location>
        <begin position="630"/>
        <end position="637"/>
    </location>
</feature>
<feature type="strand" evidence="55">
    <location>
        <begin position="643"/>
        <end position="645"/>
    </location>
</feature>
<feature type="helix" evidence="55">
    <location>
        <begin position="656"/>
        <end position="660"/>
    </location>
</feature>
<feature type="strand" evidence="55">
    <location>
        <begin position="665"/>
        <end position="668"/>
    </location>
</feature>
<feature type="helix" evidence="55">
    <location>
        <begin position="679"/>
        <end position="683"/>
    </location>
</feature>
<feature type="strand" evidence="55">
    <location>
        <begin position="689"/>
        <end position="691"/>
    </location>
</feature>
<feature type="helix" evidence="55">
    <location>
        <begin position="702"/>
        <end position="706"/>
    </location>
</feature>
<feature type="strand" evidence="55">
    <location>
        <begin position="712"/>
        <end position="714"/>
    </location>
</feature>
<feature type="helix" evidence="55">
    <location>
        <begin position="725"/>
        <end position="729"/>
    </location>
</feature>
<feature type="strand" evidence="55">
    <location>
        <begin position="735"/>
        <end position="737"/>
    </location>
</feature>
<feature type="helix" evidence="55">
    <location>
        <begin position="748"/>
        <end position="752"/>
    </location>
</feature>
<feature type="strand" evidence="55">
    <location>
        <begin position="758"/>
        <end position="760"/>
    </location>
</feature>
<feature type="helix" evidence="55">
    <location>
        <begin position="771"/>
        <end position="775"/>
    </location>
</feature>
<feature type="helix" evidence="55">
    <location>
        <begin position="781"/>
        <end position="783"/>
    </location>
</feature>
<feature type="helix" evidence="55">
    <location>
        <begin position="788"/>
        <end position="792"/>
    </location>
</feature>
<feature type="helix" evidence="55">
    <location>
        <begin position="796"/>
        <end position="807"/>
    </location>
</feature>
<keyword id="KW-0002">3D-structure</keyword>
<keyword id="KW-0007">Acetylation</keyword>
<keyword id="KW-1003">Cell membrane</keyword>
<keyword id="KW-0221">Differentiation</keyword>
<keyword id="KW-1015">Disulfide bond</keyword>
<keyword id="KW-0325">Glycoprotein</keyword>
<keyword id="KW-0407">Ion channel</keyword>
<keyword id="KW-0406">Ion transport</keyword>
<keyword id="KW-0433">Leucine-rich repeat</keyword>
<keyword id="KW-0458">Lysosome</keyword>
<keyword id="KW-0472">Membrane</keyword>
<keyword id="KW-0597">Phosphoprotein</keyword>
<keyword id="KW-1185">Reference proteome</keyword>
<keyword id="KW-0677">Repeat</keyword>
<keyword id="KW-0744">Spermatogenesis</keyword>
<keyword id="KW-0812">Transmembrane</keyword>
<keyword id="KW-1133">Transmembrane helix</keyword>
<keyword id="KW-0813">Transport</keyword>
<organism>
    <name type="scientific">Mus musculus</name>
    <name type="common">Mouse</name>
    <dbReference type="NCBI Taxonomy" id="10090"/>
    <lineage>
        <taxon>Eukaryota</taxon>
        <taxon>Metazoa</taxon>
        <taxon>Chordata</taxon>
        <taxon>Craniata</taxon>
        <taxon>Vertebrata</taxon>
        <taxon>Euteleostomi</taxon>
        <taxon>Mammalia</taxon>
        <taxon>Eutheria</taxon>
        <taxon>Euarchontoglires</taxon>
        <taxon>Glires</taxon>
        <taxon>Rodentia</taxon>
        <taxon>Myomorpha</taxon>
        <taxon>Muroidea</taxon>
        <taxon>Muridae</taxon>
        <taxon>Murinae</taxon>
        <taxon>Mus</taxon>
        <taxon>Mus</taxon>
    </lineage>
</organism>
<reference key="1">
    <citation type="journal article" date="2009" name="PLoS Biol.">
        <title>Lineage-specific biology revealed by a finished genome assembly of the mouse.</title>
        <authorList>
            <person name="Church D.M."/>
            <person name="Goodstadt L."/>
            <person name="Hillier L.W."/>
            <person name="Zody M.C."/>
            <person name="Goldstein S."/>
            <person name="She X."/>
            <person name="Bult C.J."/>
            <person name="Agarwala R."/>
            <person name="Cherry J.L."/>
            <person name="DiCuccio M."/>
            <person name="Hlavina W."/>
            <person name="Kapustin Y."/>
            <person name="Meric P."/>
            <person name="Maglott D."/>
            <person name="Birtle Z."/>
            <person name="Marques A.C."/>
            <person name="Graves T."/>
            <person name="Zhou S."/>
            <person name="Teague B."/>
            <person name="Potamousis K."/>
            <person name="Churas C."/>
            <person name="Place M."/>
            <person name="Herschleb J."/>
            <person name="Runnheim R."/>
            <person name="Forrest D."/>
            <person name="Amos-Landgraf J."/>
            <person name="Schwartz D.C."/>
            <person name="Cheng Z."/>
            <person name="Lindblad-Toh K."/>
            <person name="Eichler E.E."/>
            <person name="Ponting C.P."/>
        </authorList>
    </citation>
    <scope>NUCLEOTIDE SEQUENCE [LARGE SCALE GENOMIC DNA]</scope>
    <source>
        <strain>C57BL/6J</strain>
    </source>
</reference>
<reference key="2">
    <citation type="submission" date="2005-07" db="EMBL/GenBank/DDBJ databases">
        <authorList>
            <person name="Mural R.J."/>
            <person name="Adams M.D."/>
            <person name="Myers E.W."/>
            <person name="Smith H.O."/>
            <person name="Venter J.C."/>
        </authorList>
    </citation>
    <scope>NUCLEOTIDE SEQUENCE [LARGE SCALE GENOMIC DNA]</scope>
</reference>
<reference key="3">
    <citation type="journal article" date="2004" name="Genome Res.">
        <title>The status, quality, and expansion of the NIH full-length cDNA project: the Mammalian Gene Collection (MGC).</title>
        <authorList>
            <consortium name="The MGC Project Team"/>
        </authorList>
    </citation>
    <scope>NUCLEOTIDE SEQUENCE [LARGE SCALE MRNA]</scope>
    <source>
        <strain>C57BL/6J</strain>
        <tissue>Brain</tissue>
    </source>
</reference>
<reference key="4">
    <citation type="journal article" date="1996" name="Biol. Reprod.">
        <title>Male sterility caused by sperm cell-specific structural abnormalities in ebouriffe, a new mutation of the house mouse.</title>
        <authorList>
            <person name="Lalouette A."/>
            <person name="Lablack A."/>
            <person name="Guenet J.L."/>
            <person name="Montagutelli X."/>
            <person name="Segretain D."/>
        </authorList>
    </citation>
    <scope>DISEASE</scope>
</reference>
<reference key="5">
    <citation type="journal article" date="2003" name="J. Clin. Invest.">
        <title>A congenital mutation of the novel gene LRRC8 causes agammaglobulinemia in humans.</title>
        <authorList>
            <person name="Sawada A."/>
            <person name="Takihara Y."/>
            <person name="Kim J.Y."/>
            <person name="Matsuda-Hashii Y."/>
            <person name="Tokimasa S."/>
            <person name="Fujisaki H."/>
            <person name="Kubota K."/>
            <person name="Endo H."/>
            <person name="Onodera T."/>
            <person name="Ohta H."/>
            <person name="Ozono K."/>
            <person name="Hara J."/>
        </authorList>
    </citation>
    <scope>FUNCTION</scope>
    <scope>TISSUE SPECIFICITY</scope>
</reference>
<reference key="6">
    <citation type="journal article" date="2004" name="FEBS Lett.">
        <title>LRRC8 involved in B cell development belongs to a novel family of leucine-rich repeat proteins.</title>
        <authorList>
            <person name="Kubota K."/>
            <person name="Kim J.Y."/>
            <person name="Sawada A."/>
            <person name="Tokimasa S."/>
            <person name="Fujisaki H."/>
            <person name="Matsuda-Hashii Y."/>
            <person name="Ozono K."/>
            <person name="Hara J."/>
        </authorList>
    </citation>
    <scope>TISSUE SPECIFICITY</scope>
</reference>
<reference key="7">
    <citation type="journal article" date="2010" name="Cell">
        <title>A tissue-specific atlas of mouse protein phosphorylation and expression.</title>
        <authorList>
            <person name="Huttlin E.L."/>
            <person name="Jedrychowski M.P."/>
            <person name="Elias J.E."/>
            <person name="Goswami T."/>
            <person name="Rad R."/>
            <person name="Beausoleil S.A."/>
            <person name="Villen J."/>
            <person name="Haas W."/>
            <person name="Sowa M.E."/>
            <person name="Gygi S.P."/>
        </authorList>
    </citation>
    <scope>PHOSPHORYLATION [LARGE SCALE ANALYSIS] AT THR-200 AND SER-202</scope>
    <scope>IDENTIFICATION BY MASS SPECTROMETRY [LARGE SCALE ANALYSIS]</scope>
    <source>
        <tissue>Brain</tissue>
        <tissue>Kidney</tissue>
        <tissue>Lung</tissue>
        <tissue>Spleen</tissue>
    </source>
</reference>
<reference key="8">
    <citation type="journal article" date="2014" name="Cell">
        <title>SWELL1, a plasma membrane protein, is an essential component of volume-regulated anion channel.</title>
        <authorList>
            <person name="Qiu Z."/>
            <person name="Dubin A.E."/>
            <person name="Mathur J."/>
            <person name="Tu B."/>
            <person name="Reddy K."/>
            <person name="Miraglia L.J."/>
            <person name="Reinhardt J."/>
            <person name="Orth A.P."/>
            <person name="Patapoutian A."/>
        </authorList>
    </citation>
    <scope>TISSUE SPECIFICITY</scope>
</reference>
<reference key="9">
    <citation type="journal article" date="2014" name="J. Biol. Chem.">
        <title>The protein synthesis inhibitor blasticidin S enters mammalian cells via leucine-rich repeat-containing protein 8D.</title>
        <authorList>
            <person name="Lee C.C."/>
            <person name="Freinkman E."/>
            <person name="Sabatini D.M."/>
            <person name="Ploegh H.L."/>
        </authorList>
    </citation>
    <scope>SUBUNIT</scope>
    <scope>INTERACTION WITH LRRC8B; LRRC8C AND LRRC8D</scope>
    <scope>SUBCELLULAR LOCATION</scope>
</reference>
<reference key="10">
    <citation type="journal article" date="2014" name="J. Exp. Med.">
        <title>Leucine-rich repeat containing 8A (LRRC8A) is essential for T lymphocyte development and function.</title>
        <authorList>
            <person name="Kumar L."/>
            <person name="Chou J."/>
            <person name="Yee C.S."/>
            <person name="Borzutzky A."/>
            <person name="Vollmann E.H."/>
            <person name="von Andrian U.H."/>
            <person name="Park S.Y."/>
            <person name="Hollander G."/>
            <person name="Manis J.P."/>
            <person name="Poliani P.L."/>
            <person name="Geha R.S."/>
        </authorList>
    </citation>
    <scope>FUNCTION</scope>
    <scope>TISSUE SPECIFICITY</scope>
    <scope>DISRUPTION PHENOTYPE</scope>
</reference>
<reference key="11">
    <citation type="journal article" date="2017" name="J. Allergy Clin. Immunol.">
        <title>Leucine-rich repeat containing 8A (LRRC8A)-dependent volume-regulated anion channel activity is dispensable for T-cell development and function.</title>
        <authorList>
            <person name="Platt C.D."/>
            <person name="Chou J."/>
            <person name="Houlihan P."/>
            <person name="Badran Y.R."/>
            <person name="Kumar L."/>
            <person name="Bainter W."/>
            <person name="Poliani P.L."/>
            <person name="Perez C.J."/>
            <person name="Dent S.Y.R."/>
            <person name="Clapham D.E."/>
            <person name="Benavides F."/>
            <person name="Geha R.S."/>
        </authorList>
    </citation>
    <scope>DISEASE</scope>
    <scope>VARIANT EBO 443-PHE--ALA-810 DEL</scope>
</reference>
<reference key="12">
    <citation type="journal article" date="2018" name="J. Biol. Chem.">
        <title>LRRC8/VRAC anion channels are required for late stages of spermatid development in mice.</title>
        <authorList>
            <person name="Lueck J.C."/>
            <person name="Puchkov D."/>
            <person name="Ullrich F."/>
            <person name="Jentsch T.J."/>
        </authorList>
    </citation>
    <scope>DISRUPTION PHENOTYPE</scope>
</reference>
<reference key="13">
    <citation type="journal article" date="2018" name="Nat. Commun.">
        <title>SWELL1 is a glucose sensor regulating beta-cell excitability and systemic glycaemia.</title>
        <authorList>
            <person name="Kang C."/>
            <person name="Xie L."/>
            <person name="Gunasekar S.K."/>
            <person name="Mishra A."/>
            <person name="Zhang Y."/>
            <person name="Pai S."/>
            <person name="Gao Y."/>
            <person name="Kumar A."/>
            <person name="Norris A.W."/>
            <person name="Stephens S.B."/>
            <person name="Sah R."/>
        </authorList>
    </citation>
    <scope>FUNCTION</scope>
    <scope>DISRUPTION PHENOTYPE</scope>
</reference>
<reference key="14">
    <citation type="journal article" date="2018" name="Nat. Commun.">
        <title>LRRC8/VRAC anion channels enhance beta-cell glucose sensing and insulin secretion.</title>
        <authorList>
            <person name="Stuhlmann T."/>
            <person name="Planells-Cases R."/>
            <person name="Jentsch T.J."/>
        </authorList>
    </citation>
    <scope>FUNCTION</scope>
    <scope>DISRUPTION PHENOTYPE</scope>
    <scope>TISSUE SPECIFICITY</scope>
</reference>
<reference key="15">
    <citation type="journal article" date="2018" name="JCI Insight">
        <title>Deficient LRRC8A-dependent volume-regulated anion channel activity is associated with male infertility in mice.</title>
        <authorList>
            <person name="Bao J."/>
            <person name="Perez C.J."/>
            <person name="Kim J."/>
            <person name="Zhang H."/>
            <person name="Murphy C.J."/>
            <person name="Hamidi T."/>
            <person name="Jaubert J."/>
            <person name="Platt C.D."/>
            <person name="Chou J."/>
            <person name="Deng M."/>
            <person name="Zhou M.H."/>
            <person name="Huang Y."/>
            <person name="Gaitan-Penas H."/>
            <person name="Guenet J.L."/>
            <person name="Lin K."/>
            <person name="Lu Y."/>
            <person name="Chen T."/>
            <person name="Bedford M.T."/>
            <person name="Dent S.Y."/>
            <person name="Richburg J.H."/>
            <person name="Estevez R."/>
            <person name="Pan H.L."/>
            <person name="Geha R.S."/>
            <person name="Shi Q."/>
            <person name="Benavides F."/>
        </authorList>
    </citation>
    <scope>FUNCTION</scope>
    <scope>SUBCELLULAR LOCATION</scope>
    <scope>DISEASE</scope>
    <scope>DISRUPTION PHENOTYPE</scope>
    <scope>TISSUE SPECIFICITY</scope>
    <scope>VARIANT EBO 443-PHE--ALA-810 DEL</scope>
</reference>
<reference key="16">
    <citation type="journal article" date="2019" name="J. Biol. Chem.">
        <title>The LRRC8/VRAC anion channel facilitates myogenic differentiation of murine myoblasts by promoting membrane hyperpolarization.</title>
        <authorList>
            <person name="Chen L."/>
            <person name="Becker T.M."/>
            <person name="Koch U."/>
            <person name="Stauber T."/>
        </authorList>
    </citation>
    <scope>FUNCTION</scope>
</reference>
<reference key="17">
    <citation type="journal article" date="2020" name="Elife">
        <title>SWELL1 regulates skeletal muscle cell size, intracellular signaling, adiposity and glucose metabolism.</title>
        <authorList>
            <person name="Kumar A."/>
            <person name="Xie L."/>
            <person name="Ta C.M."/>
            <person name="Hinton A.O."/>
            <person name="Gunasekar S.K."/>
            <person name="Minerath R.A."/>
            <person name="Shen K."/>
            <person name="Maurer J.M."/>
            <person name="Grueter C.E."/>
            <person name="Abel E.D."/>
            <person name="Meyer G."/>
            <person name="Sah R."/>
        </authorList>
    </citation>
    <scope>FUNCTION</scope>
    <scope>DISRUPTION PHENOTYPE</scope>
    <scope>INTERACTION WITH GRB2</scope>
</reference>
<reference key="18">
    <citation type="journal article" date="2020" name="Immunity">
        <title>Transfer of cgamp into bystander cells via LRRC8 volume-regulated anion channels augments STING-mediated interferon responses and anti-viral immunity.</title>
        <authorList>
            <person name="Zhou C."/>
            <person name="Chen X."/>
            <person name="Planells-Cases R."/>
            <person name="Chu J."/>
            <person name="Wang L."/>
            <person name="Cao L."/>
            <person name="Li Z."/>
            <person name="Lopez-Cayuqueo K.I."/>
            <person name="Xie Y."/>
            <person name="Ye S."/>
            <person name="Wang X."/>
            <person name="Ullrich F."/>
            <person name="Ma S."/>
            <person name="Fang Y."/>
            <person name="Zhang X."/>
            <person name="Qian Z."/>
            <person name="Liang X."/>
            <person name="Cai S.Q."/>
            <person name="Jiang Z."/>
            <person name="Zhou D."/>
            <person name="Leng Q."/>
            <person name="Xiao T.S."/>
            <person name="Lan K."/>
            <person name="Yang J."/>
            <person name="Li H."/>
            <person name="Peng C."/>
            <person name="Qiu Z."/>
            <person name="Jentsch T.J."/>
            <person name="Xiao H."/>
        </authorList>
    </citation>
    <scope>FUNCTION</scope>
    <scope>TRANSPORTER ACTIVITY</scope>
</reference>
<reference key="19">
    <citation type="journal article" date="2023" name="Pharmacol. Res.">
        <title>The volume regulated anion channel VRAC regulates NLRP3 inflammasome by modulating itaconate efflux and mitochondria function.</title>
        <authorList>
            <person name="Wu X."/>
            <person name="Yi X."/>
            <person name="Zhao B."/>
            <person name="Zhi Y."/>
            <person name="Xu Z."/>
            <person name="Cao Y."/>
            <person name="Cao X."/>
            <person name="Pang J."/>
            <person name="Yung K.K.L."/>
            <person name="Zhang S."/>
            <person name="Liu S."/>
            <person name="Zhou P."/>
        </authorList>
    </citation>
    <scope>FUNCTION</scope>
    <scope>DISRUPTION PHENOTYPE</scope>
</reference>
<reference evidence="31 32 33 34" key="20">
    <citation type="journal article" date="2018" name="Nature">
        <title>Structure of a volume-regulated anion channel of the LRRC8 family.</title>
        <authorList>
            <person name="Deneka D."/>
            <person name="Sawicka M."/>
            <person name="Lam A.K.M."/>
            <person name="Paulino C."/>
            <person name="Dutzler R."/>
        </authorList>
    </citation>
    <scope>X-RAY CRYSTALLOGRAPHY (1.80 ANGSTROMS) OF 398-810</scope>
    <scope>STRUCTURE BY ELECTRON MICROSCOPY (3.66 ANGSTROMS)</scope>
    <scope>STRUCTURE BY ELECTRON MICROSCOPY (7.94 ANGSTROMS) IN COMPLEX WITH LRRC8C</scope>
    <scope>FUNCTION</scope>
    <scope>SUBUNIT</scope>
    <scope>SUBCELLULAR LOCATION</scope>
    <scope>TOPOLOGY</scope>
    <scope>DISULFIDE BONDS</scope>
    <scope>MUTAGENESIS OF ARG-103</scope>
</reference>
<reference evidence="35 36 37" key="21">
    <citation type="journal article" date="2019" name="Elife">
        <title>Cryo-EM structures of the DCPIB-inhibited volume-regulated anion channel LRRC8A in lipid nanodiscs.</title>
        <authorList>
            <person name="Kern D.M."/>
            <person name="Oh S."/>
            <person name="Hite R.K."/>
            <person name="Brohawn S.G."/>
        </authorList>
    </citation>
    <scope>STRUCTURE BY ELECTRON MICROSCOPY (3.21 ANGSTROMS) IN COMPLEX WITH DCPIB</scope>
    <scope>ACTIVITY REGULATION</scope>
    <scope>DISULFIDE BONDS</scope>
    <scope>SUBUNIT</scope>
    <scope>DOMAIN</scope>
</reference>
<reference evidence="38 39" key="22">
    <citation type="journal article" date="2023" name="Nat. Struct. Mol. Biol.">
        <title>Structure of a volume-regulated heteromeric LRRC8A/C channel.</title>
        <authorList>
            <person name="Rutz S."/>
            <person name="Deneka D."/>
            <person name="Dittmann A."/>
            <person name="Sawicka M."/>
            <person name="Dutzler R."/>
        </authorList>
    </citation>
    <scope>STRUCTURE BY ELECTRON MICROSCOPY (3.80 ANGSTROMS) OF 2-810 IN COMPLEX WITH LRRC8C AND ANTIBODIES</scope>
    <scope>FUNCTION</scope>
    <scope>TRANSPORTER ACTIVITY</scope>
    <scope>SUBUNIT</scope>
    <scope>TOPOLOGY</scope>
    <scope>DISULFIDE BONDS</scope>
</reference>
<reference evidence="40 41 42 43 44 45 46 47 48 49 50" key="23">
    <citation type="journal article" date="2023" name="Nat. Struct. Mol. Biol.">
        <title>Structural basis for assembly and lipid-mediated gating of LRRC8A:C volume-regulated anion channels.</title>
        <authorList>
            <person name="Kern D.M."/>
            <person name="Bleier J."/>
            <person name="Mukherjee S."/>
            <person name="Hill J.M."/>
            <person name="Kossiakoff A.A."/>
            <person name="Isacoff E.Y."/>
            <person name="Brohawn S.G."/>
        </authorList>
    </citation>
    <scope>STRUCTURE BY ELECTRON MICROSCOPY (2.95 ANGSTROMS) OF 1-71 AND 91-810 OF WILD-TYPE AND MUTANT ASP-48 IN COMPLEXES WITH LRRC8C</scope>
    <scope>FUNCTION</scope>
    <scope>TRANSPORTER ACTIVITY</scope>
    <scope>ACTIVITY REGULATION</scope>
    <scope>SUBUNIT</scope>
    <scope>TOPOLOGY</scope>
    <scope>DISULFIDE BONDS</scope>
    <scope>MUTAGENESIS OF VAL-40; THR-44; VAL-47 AND THR-48</scope>
</reference>
<comment type="function">
    <text evidence="2 4 7 10 11 12 14 16 17 18 19 20">Essential component of the volume-regulated anion channel (VRAC, also named VSOAC channel), an anion channel required to maintain a constant cell volume in response to extracellular or intracellular osmotic changes (PubMed:29769723, PubMed:30135305, PubMed:36522427, PubMed:36928458). The VRAC channel conducts iodide better than chloride and can also conduct organic osmolytes like taurine (By similarity). Mediates efflux of amino acids, such as aspartate and glutamate, in response to osmotic stress (By similarity). In complex with LRRC8C or LRRC8E, acts as a transporter of immunoreactive cyclic dinucleotide GMP-AMP (2'-3'-cGAMP), an immune messenger produced in response to DNA virus in the cytosol: mediates both import and export of 2'-3'-cGAMP, thereby promoting transfer of 2'-3'-cGAMP to bystander cells (PubMed:32277911). In contrast, complexes containing LRRC8D inhibit transport of 2'-3'-cGAMP (By similarity). Required for in vivo channel activity, together with at least one other family member (LRRC8B, LRRC8C, LRRC8D or LRRC8E); channel characteristics depend on the precise subunit composition (PubMed:36522427, PubMed:36928458). Can form functional channels by itself (in vitro) (By similarity). Involved in B-cell development: required for the pro-B cell to pre-B cell transition (PubMed:14660746, PubMed:24752297). Also required for T-cell development (PubMed:24752297). Required for myoblast differentiation: VRAC activity promotes membrane hyperpolarization and regulates insulin-stimulated glucose metabolism and oxygen consumption (PubMed:31387946, PubMed:32930093). Also acts as a regulator of glucose-sensing in pancreatic beta cells: VRAC currents, generated in response to hypotonicity- or glucose-induced beta cell swelling, depolarize cells, thereby causing electrical excitation, leading to increase glucose sensitivity and insulin secretion (PubMed:29371604, PubMed:29773801). Also plays a role in lysosome homeostasis by forming functional lysosomal VRAC channels in response to low cytoplasmic ionic strength condition: lysosomal VRAC channels are necessary for the formation of large lysosome-derived vacuoles, which store and then expel excess water to maintain cytosolic water homeostasis (By similarity). Acts as a key factor in NLRP3 inflammasome activation by modulating itaconate efflux and mitochondria function (PubMed:38006980).</text>
</comment>
<comment type="catalytic activity">
    <reaction evidence="19 20">
        <text>chloride(in) = chloride(out)</text>
        <dbReference type="Rhea" id="RHEA:29823"/>
        <dbReference type="ChEBI" id="CHEBI:17996"/>
    </reaction>
</comment>
<comment type="catalytic activity">
    <reaction evidence="2">
        <text>iodide(out) = iodide(in)</text>
        <dbReference type="Rhea" id="RHEA:66324"/>
        <dbReference type="ChEBI" id="CHEBI:16382"/>
    </reaction>
</comment>
<comment type="catalytic activity">
    <reaction evidence="2">
        <text>taurine(out) = taurine(in)</text>
        <dbReference type="Rhea" id="RHEA:66328"/>
        <dbReference type="ChEBI" id="CHEBI:507393"/>
    </reaction>
</comment>
<comment type="catalytic activity">
    <reaction evidence="1">
        <text>L-aspartate(out) = L-aspartate(in)</text>
        <dbReference type="Rhea" id="RHEA:66332"/>
        <dbReference type="ChEBI" id="CHEBI:29991"/>
    </reaction>
</comment>
<comment type="catalytic activity">
    <reaction evidence="2">
        <text>L-glutamate(out) = L-glutamate(in)</text>
        <dbReference type="Rhea" id="RHEA:66336"/>
        <dbReference type="ChEBI" id="CHEBI:29985"/>
    </reaction>
</comment>
<comment type="catalytic activity">
    <reaction evidence="1">
        <text>myo-inositol(out) = myo-inositol(in)</text>
        <dbReference type="Rhea" id="RHEA:32867"/>
        <dbReference type="ChEBI" id="CHEBI:17268"/>
    </reaction>
</comment>
<comment type="catalytic activity">
    <reaction evidence="17">
        <text>2',3'-cGAMP(out) = 2',3'-cGAMP(in)</text>
        <dbReference type="Rhea" id="RHEA:66320"/>
        <dbReference type="ChEBI" id="CHEBI:143093"/>
    </reaction>
    <physiologicalReaction direction="left-to-right" evidence="17">
        <dbReference type="Rhea" id="RHEA:66321"/>
    </physiologicalReaction>
    <physiologicalReaction direction="right-to-left" evidence="17">
        <dbReference type="Rhea" id="RHEA:66322"/>
    </physiologicalReaction>
</comment>
<comment type="activity regulation">
    <text evidence="15 20">Inhibited by (4-[(2-butyl-6,7-dichloro-2-cyclopentyl-2,3-dihydro-1-oxo-1H-inden-5-yl)oxy]butanoic acid), which plugs the channel like a cork in a bottle by binding in the extracellular selectivity filter and sterically occluding ion conduction (PubMed:30775971). Lipids may block conduction in closed heterohexameric channels (PubMed:36928458).</text>
</comment>
<comment type="subunit">
    <text evidence="2 8 11 15 18 19 20">Heterohexamer; oligomerizes with other LRRC8 proteins (LRRC8B, LRRC8C, LRRC8D and/or LRRC8E) to form a heterohexamer (PubMed:24782309, PubMed:29769723, PubMed:30775971, PubMed:36522427, PubMed:36928458). Can form homohexamers in vitro, but these have lower conductance than heterohexamers (PubMed:29769723). In vivo, the subunit composition may depend primarily on expression levels, and heterooligomeric channels containing various proportions of the different LRRC8 proteins may coexist (PubMed:36522427). Interact with GRB2 (PubMed:32930093). Interacts with NOX4; this interaction prevents the ubiquitin-mediated degradation of LRRC8A (By similarity).</text>
</comment>
<comment type="interaction">
    <interactant intactId="EBI-20718010">
        <id>Q80WG5</id>
    </interactant>
    <interactant intactId="EBI-20718010">
        <id>Q80WG5</id>
        <label>Lrrc8a</label>
    </interactant>
    <organismsDiffer>false</organismsDiffer>
    <experiments>4</experiments>
</comment>
<comment type="subcellular location">
    <subcellularLocation>
        <location evidence="8 11 14">Cell membrane</location>
        <topology evidence="11 15">Multi-pass membrane protein</topology>
    </subcellularLocation>
    <subcellularLocation>
        <location evidence="2">Lysosome membrane</location>
        <topology evidence="11 15">Multi-pass membrane protein</topology>
    </subcellularLocation>
    <text evidence="2">Mainly localizes to the cell membrane, with some intracellular localization to lysosomes.</text>
</comment>
<comment type="tissue specificity">
    <text evidence="4 5 6 7 12 14">Ubiquitously expressed (PubMed:24725410, PubMed:30135305). High levels detected in the bone marrow; lower levels found in peripheral blood cells (PubMed:14660746, PubMed:15094057, PubMed:24752297). Highly expressed in pancreatic beta cells (PubMed:29773801).</text>
</comment>
<comment type="domain">
    <text evidence="15">The volume-regulated anion channel (VRAC) channel forms a trimer of dimers, with symmetry mismatch between the pore-forming domain and the cytosolic LRR repeats, a topology similar to gap junction proteins.</text>
</comment>
<comment type="domain">
    <text evidence="2">The di-leucine motif is required for lysosomal localization.</text>
</comment>
<comment type="domain">
    <text evidence="2">The cytoplasmic N-terminus preceding the first transmembrane (residues 1-22) regulates volume-regulated anion channel (VRAC) conductance, ion permeability and inactivation gating.</text>
</comment>
<comment type="PTM">
    <text evidence="2">N-glycosylated.</text>
</comment>
<comment type="disease">
    <text evidence="9 14 22">Defects in Lrrc8a are the cause of ebouriffe (ebo), a spontaneous mutation that causes male sterility (PubMed:28192143, PubMed:30135305, PubMed:8828840). Spermatozoa present in the epididymis display severe malformations, mostly of the tail (PubMed:28192143, PubMed:8828840). A drastic decrease of the spermatid population is observed, whereas spermatogonia and spermatocytes seem moderately affected (PubMed:28192143, PubMed:8828840). Defects are caused by decreased volume-regulated anion channel (VRAC) activity in germ cells (PubMed:30135305). Oogenesis is not affected but embryos derived from ebo/ebo females show early developmental failure (PubMed:30135305).</text>
</comment>
<comment type="disruption phenotype">
    <text evidence="7 10 12 13 14 18 21">Increased prenatal and postnatal mortality, growth retardation, and multiple tissue abnormalities (PubMed:24752297). B-cell development is slightly impaired, without affecting B-cell function (PubMed:24752297). Mice however show a cell-autonomous early block in thymocyte development and impairs peripheral T-cell expansion and function (PubMed:24752297). Conditional deletion in germ cells leads to abnormal sperm and male infertility: the cytoplasm of late spermatids appears swollen, preventing reduction of the cytoplasm during further development into spermatozoa (PubMed:29880644, PubMed:30135305). Spermatozoa display severely disorganized mitochondrial sheaths in the midpiece region, as well as angulated or coiled flagella, resulting in dramatically reduced sperm motility (PubMed:29880644). Conditional deletion in Sertoli cells does not affect male fertility (PubMed:29880644). Conditional deletion in pancreatic beta cells have normal resting serum glucose levels but impaired glucose tolerance (PubMed:29371604, PubMed:29773801). Conditional deletion in myotubes leads to impaired myoblast differentiation: mice have smaller myofibers, generate less force ex vivo, and display reduced exercise endurance, associated with increased adiposity under basal conditions, and glucose intolerance and insulin resistance when raised on a high-fat diet (PubMed:32930093). Lrrc8a deficiency also specifically blocks NLRP3 inflammasome assembly (PubMed:38006980).</text>
</comment>
<comment type="similarity">
    <text evidence="28">Belongs to the LRRC8 family.</text>
</comment>
<evidence type="ECO:0000250" key="1">
    <source>
        <dbReference type="UniProtKB" id="Q4V8I7"/>
    </source>
</evidence>
<evidence type="ECO:0000250" key="2">
    <source>
        <dbReference type="UniProtKB" id="Q8IWT6"/>
    </source>
</evidence>
<evidence type="ECO:0000255" key="3"/>
<evidence type="ECO:0000269" key="4">
    <source>
    </source>
</evidence>
<evidence type="ECO:0000269" key="5">
    <source>
    </source>
</evidence>
<evidence type="ECO:0000269" key="6">
    <source>
    </source>
</evidence>
<evidence type="ECO:0000269" key="7">
    <source>
    </source>
</evidence>
<evidence type="ECO:0000269" key="8">
    <source>
    </source>
</evidence>
<evidence type="ECO:0000269" key="9">
    <source>
    </source>
</evidence>
<evidence type="ECO:0000269" key="10">
    <source>
    </source>
</evidence>
<evidence type="ECO:0000269" key="11">
    <source>
    </source>
</evidence>
<evidence type="ECO:0000269" key="12">
    <source>
    </source>
</evidence>
<evidence type="ECO:0000269" key="13">
    <source>
    </source>
</evidence>
<evidence type="ECO:0000269" key="14">
    <source>
    </source>
</evidence>
<evidence type="ECO:0000269" key="15">
    <source>
    </source>
</evidence>
<evidence type="ECO:0000269" key="16">
    <source>
    </source>
</evidence>
<evidence type="ECO:0000269" key="17">
    <source>
    </source>
</evidence>
<evidence type="ECO:0000269" key="18">
    <source>
    </source>
</evidence>
<evidence type="ECO:0000269" key="19">
    <source>
    </source>
</evidence>
<evidence type="ECO:0000269" key="20">
    <source>
    </source>
</evidence>
<evidence type="ECO:0000269" key="21">
    <source>
    </source>
</evidence>
<evidence type="ECO:0000269" key="22">
    <source>
    </source>
</evidence>
<evidence type="ECO:0000303" key="23">
    <source>
    </source>
</evidence>
<evidence type="ECO:0000303" key="24">
    <source>
    </source>
</evidence>
<evidence type="ECO:0000303" key="25">
    <source>
    </source>
</evidence>
<evidence type="ECO:0000303" key="26">
    <source>
    </source>
</evidence>
<evidence type="ECO:0000303" key="27">
    <source>
    </source>
</evidence>
<evidence type="ECO:0000305" key="28"/>
<evidence type="ECO:0000305" key="29">
    <source>
    </source>
</evidence>
<evidence type="ECO:0000312" key="30">
    <source>
        <dbReference type="MGI" id="MGI:2652847"/>
    </source>
</evidence>
<evidence type="ECO:0007744" key="31">
    <source>
        <dbReference type="PDB" id="6FNW"/>
    </source>
</evidence>
<evidence type="ECO:0007744" key="32">
    <source>
        <dbReference type="PDB" id="6G8Z"/>
    </source>
</evidence>
<evidence type="ECO:0007744" key="33">
    <source>
        <dbReference type="PDB" id="6G9L"/>
    </source>
</evidence>
<evidence type="ECO:0007744" key="34">
    <source>
        <dbReference type="PDB" id="6G9O"/>
    </source>
</evidence>
<evidence type="ECO:0007744" key="35">
    <source>
        <dbReference type="PDB" id="6NZW"/>
    </source>
</evidence>
<evidence type="ECO:0007744" key="36">
    <source>
        <dbReference type="PDB" id="6NZZ"/>
    </source>
</evidence>
<evidence type="ECO:0007744" key="37">
    <source>
        <dbReference type="PDB" id="6O00"/>
    </source>
</evidence>
<evidence type="ECO:0007744" key="38">
    <source>
        <dbReference type="PDB" id="8B41"/>
    </source>
</evidence>
<evidence type="ECO:0007744" key="39">
    <source>
        <dbReference type="PDB" id="8B42"/>
    </source>
</evidence>
<evidence type="ECO:0007744" key="40">
    <source>
        <dbReference type="PDB" id="8DR8"/>
    </source>
</evidence>
<evidence type="ECO:0007744" key="41">
    <source>
        <dbReference type="PDB" id="8DRA"/>
    </source>
</evidence>
<evidence type="ECO:0007744" key="42">
    <source>
        <dbReference type="PDB" id="8DRE"/>
    </source>
</evidence>
<evidence type="ECO:0007744" key="43">
    <source>
        <dbReference type="PDB" id="8DRK"/>
    </source>
</evidence>
<evidence type="ECO:0007744" key="44">
    <source>
        <dbReference type="PDB" id="8DRN"/>
    </source>
</evidence>
<evidence type="ECO:0007744" key="45">
    <source>
        <dbReference type="PDB" id="8DRO"/>
    </source>
</evidence>
<evidence type="ECO:0007744" key="46">
    <source>
        <dbReference type="PDB" id="8DRQ"/>
    </source>
</evidence>
<evidence type="ECO:0007744" key="47">
    <source>
        <dbReference type="PDB" id="8DS3"/>
    </source>
</evidence>
<evidence type="ECO:0007744" key="48">
    <source>
        <dbReference type="PDB" id="8DS9"/>
    </source>
</evidence>
<evidence type="ECO:0007744" key="49">
    <source>
        <dbReference type="PDB" id="8DSA"/>
    </source>
</evidence>
<evidence type="ECO:0007744" key="50">
    <source>
        <dbReference type="PDB" id="8F74"/>
    </source>
</evidence>
<evidence type="ECO:0007744" key="51">
    <source>
        <dbReference type="PDB" id="8F77"/>
    </source>
</evidence>
<evidence type="ECO:0007744" key="52">
    <source>
        <dbReference type="PDB" id="8F79"/>
    </source>
</evidence>
<evidence type="ECO:0007744" key="53">
    <source>
        <dbReference type="PDB" id="8F7B"/>
    </source>
</evidence>
<evidence type="ECO:0007744" key="54">
    <source>
    </source>
</evidence>
<evidence type="ECO:0007829" key="55">
    <source>
        <dbReference type="PDB" id="6FNW"/>
    </source>
</evidence>
<evidence type="ECO:0007829" key="56">
    <source>
        <dbReference type="PDB" id="8DR8"/>
    </source>
</evidence>
<evidence type="ECO:0007829" key="57">
    <source>
        <dbReference type="PDB" id="8DRK"/>
    </source>
</evidence>
<proteinExistence type="evidence at protein level"/>